<dbReference type="EMBL" id="CU928163">
    <property type="protein sequence ID" value="CAR13202.1"/>
    <property type="molecule type" value="Genomic_DNA"/>
</dbReference>
<dbReference type="RefSeq" id="WP_000124850.1">
    <property type="nucleotide sequence ID" value="NC_011751.1"/>
</dbReference>
<dbReference type="RefSeq" id="YP_002412735.1">
    <property type="nucleotide sequence ID" value="NC_011751.1"/>
</dbReference>
<dbReference type="SMR" id="B7N553"/>
<dbReference type="STRING" id="585056.ECUMN_2006"/>
<dbReference type="GeneID" id="98388757"/>
<dbReference type="KEGG" id="eum:ECUMN_2006"/>
<dbReference type="PATRIC" id="fig|585056.7.peg.2191"/>
<dbReference type="HOGENOM" id="CLU_123265_0_1_6"/>
<dbReference type="Proteomes" id="UP000007097">
    <property type="component" value="Chromosome"/>
</dbReference>
<dbReference type="GO" id="GO:1990904">
    <property type="term" value="C:ribonucleoprotein complex"/>
    <property type="evidence" value="ECO:0007669"/>
    <property type="project" value="UniProtKB-KW"/>
</dbReference>
<dbReference type="GO" id="GO:0005840">
    <property type="term" value="C:ribosome"/>
    <property type="evidence" value="ECO:0007669"/>
    <property type="project" value="UniProtKB-KW"/>
</dbReference>
<dbReference type="GO" id="GO:0019843">
    <property type="term" value="F:rRNA binding"/>
    <property type="evidence" value="ECO:0007669"/>
    <property type="project" value="UniProtKB-UniRule"/>
</dbReference>
<dbReference type="GO" id="GO:0003735">
    <property type="term" value="F:structural constituent of ribosome"/>
    <property type="evidence" value="ECO:0007669"/>
    <property type="project" value="InterPro"/>
</dbReference>
<dbReference type="GO" id="GO:0000027">
    <property type="term" value="P:ribosomal large subunit assembly"/>
    <property type="evidence" value="ECO:0007669"/>
    <property type="project" value="UniProtKB-UniRule"/>
</dbReference>
<dbReference type="GO" id="GO:0006412">
    <property type="term" value="P:translation"/>
    <property type="evidence" value="ECO:0007669"/>
    <property type="project" value="InterPro"/>
</dbReference>
<dbReference type="CDD" id="cd07026">
    <property type="entry name" value="Ribosomal_L20"/>
    <property type="match status" value="1"/>
</dbReference>
<dbReference type="FunFam" id="1.10.1900.20:FF:000001">
    <property type="entry name" value="50S ribosomal protein L20"/>
    <property type="match status" value="1"/>
</dbReference>
<dbReference type="Gene3D" id="6.10.160.10">
    <property type="match status" value="1"/>
</dbReference>
<dbReference type="Gene3D" id="1.10.1900.20">
    <property type="entry name" value="Ribosomal protein L20"/>
    <property type="match status" value="1"/>
</dbReference>
<dbReference type="HAMAP" id="MF_00382">
    <property type="entry name" value="Ribosomal_bL20"/>
    <property type="match status" value="1"/>
</dbReference>
<dbReference type="InterPro" id="IPR005813">
    <property type="entry name" value="Ribosomal_bL20"/>
</dbReference>
<dbReference type="InterPro" id="IPR049946">
    <property type="entry name" value="RIBOSOMAL_L20_CS"/>
</dbReference>
<dbReference type="InterPro" id="IPR035566">
    <property type="entry name" value="Ribosomal_protein_bL20_C"/>
</dbReference>
<dbReference type="NCBIfam" id="TIGR01032">
    <property type="entry name" value="rplT_bact"/>
    <property type="match status" value="1"/>
</dbReference>
<dbReference type="PANTHER" id="PTHR10986">
    <property type="entry name" value="39S RIBOSOMAL PROTEIN L20"/>
    <property type="match status" value="1"/>
</dbReference>
<dbReference type="Pfam" id="PF00453">
    <property type="entry name" value="Ribosomal_L20"/>
    <property type="match status" value="1"/>
</dbReference>
<dbReference type="PRINTS" id="PR00062">
    <property type="entry name" value="RIBOSOMALL20"/>
</dbReference>
<dbReference type="SUPFAM" id="SSF74731">
    <property type="entry name" value="Ribosomal protein L20"/>
    <property type="match status" value="1"/>
</dbReference>
<dbReference type="PROSITE" id="PS00937">
    <property type="entry name" value="RIBOSOMAL_L20"/>
    <property type="match status" value="1"/>
</dbReference>
<keyword id="KW-0687">Ribonucleoprotein</keyword>
<keyword id="KW-0689">Ribosomal protein</keyword>
<keyword id="KW-0694">RNA-binding</keyword>
<keyword id="KW-0699">rRNA-binding</keyword>
<feature type="chain" id="PRO_1000122313" description="Large ribosomal subunit protein bL20">
    <location>
        <begin position="1"/>
        <end position="118"/>
    </location>
</feature>
<gene>
    <name evidence="1" type="primary">rplT</name>
    <name type="ordered locus">ECUMN_2006</name>
</gene>
<protein>
    <recommendedName>
        <fullName evidence="1">Large ribosomal subunit protein bL20</fullName>
    </recommendedName>
    <alternativeName>
        <fullName evidence="2">50S ribosomal protein L20</fullName>
    </alternativeName>
</protein>
<name>RL20_ECOLU</name>
<organism>
    <name type="scientific">Escherichia coli O17:K52:H18 (strain UMN026 / ExPEC)</name>
    <dbReference type="NCBI Taxonomy" id="585056"/>
    <lineage>
        <taxon>Bacteria</taxon>
        <taxon>Pseudomonadati</taxon>
        <taxon>Pseudomonadota</taxon>
        <taxon>Gammaproteobacteria</taxon>
        <taxon>Enterobacterales</taxon>
        <taxon>Enterobacteriaceae</taxon>
        <taxon>Escherichia</taxon>
    </lineage>
</organism>
<accession>B7N553</accession>
<sequence>MARVKRGVIARARHKKILKQAKGYYGARSRVYRVAFQAVIKAGQYAYRDRRQRKRQFRQLWIARINAAARQNGISYSKFINGLKKASVEIDRKILADIAVFDKVAFTALVEKAKAALA</sequence>
<evidence type="ECO:0000255" key="1">
    <source>
        <dbReference type="HAMAP-Rule" id="MF_00382"/>
    </source>
</evidence>
<evidence type="ECO:0000305" key="2"/>
<reference key="1">
    <citation type="journal article" date="2009" name="PLoS Genet.">
        <title>Organised genome dynamics in the Escherichia coli species results in highly diverse adaptive paths.</title>
        <authorList>
            <person name="Touchon M."/>
            <person name="Hoede C."/>
            <person name="Tenaillon O."/>
            <person name="Barbe V."/>
            <person name="Baeriswyl S."/>
            <person name="Bidet P."/>
            <person name="Bingen E."/>
            <person name="Bonacorsi S."/>
            <person name="Bouchier C."/>
            <person name="Bouvet O."/>
            <person name="Calteau A."/>
            <person name="Chiapello H."/>
            <person name="Clermont O."/>
            <person name="Cruveiller S."/>
            <person name="Danchin A."/>
            <person name="Diard M."/>
            <person name="Dossat C."/>
            <person name="Karoui M.E."/>
            <person name="Frapy E."/>
            <person name="Garry L."/>
            <person name="Ghigo J.M."/>
            <person name="Gilles A.M."/>
            <person name="Johnson J."/>
            <person name="Le Bouguenec C."/>
            <person name="Lescat M."/>
            <person name="Mangenot S."/>
            <person name="Martinez-Jehanne V."/>
            <person name="Matic I."/>
            <person name="Nassif X."/>
            <person name="Oztas S."/>
            <person name="Petit M.A."/>
            <person name="Pichon C."/>
            <person name="Rouy Z."/>
            <person name="Ruf C.S."/>
            <person name="Schneider D."/>
            <person name="Tourret J."/>
            <person name="Vacherie B."/>
            <person name="Vallenet D."/>
            <person name="Medigue C."/>
            <person name="Rocha E.P.C."/>
            <person name="Denamur E."/>
        </authorList>
    </citation>
    <scope>NUCLEOTIDE SEQUENCE [LARGE SCALE GENOMIC DNA]</scope>
    <source>
        <strain>UMN026 / ExPEC</strain>
    </source>
</reference>
<proteinExistence type="inferred from homology"/>
<comment type="function">
    <text evidence="1">Binds directly to 23S ribosomal RNA and is necessary for the in vitro assembly process of the 50S ribosomal subunit. It is not involved in the protein synthesizing functions of that subunit.</text>
</comment>
<comment type="similarity">
    <text evidence="1">Belongs to the bacterial ribosomal protein bL20 family.</text>
</comment>